<dbReference type="EC" id="7.1.2.2" evidence="1"/>
<dbReference type="EMBL" id="CP000086">
    <property type="protein sequence ID" value="ABC36651.1"/>
    <property type="molecule type" value="Genomic_DNA"/>
</dbReference>
<dbReference type="PDB" id="4Q4L">
    <property type="method" value="X-ray"/>
    <property type="resolution" value="2.20 A"/>
    <property type="chains" value="A=1-464"/>
</dbReference>
<dbReference type="PDBsum" id="4Q4L"/>
<dbReference type="SMR" id="Q2STE9"/>
<dbReference type="KEGG" id="bte:BTH_I3308"/>
<dbReference type="HOGENOM" id="CLU_022398_0_2_4"/>
<dbReference type="EvolutionaryTrace" id="Q2STE9"/>
<dbReference type="Proteomes" id="UP000001930">
    <property type="component" value="Chromosome I"/>
</dbReference>
<dbReference type="GO" id="GO:0005886">
    <property type="term" value="C:plasma membrane"/>
    <property type="evidence" value="ECO:0007669"/>
    <property type="project" value="UniProtKB-SubCell"/>
</dbReference>
<dbReference type="GO" id="GO:0045259">
    <property type="term" value="C:proton-transporting ATP synthase complex"/>
    <property type="evidence" value="ECO:0007669"/>
    <property type="project" value="UniProtKB-KW"/>
</dbReference>
<dbReference type="GO" id="GO:0005524">
    <property type="term" value="F:ATP binding"/>
    <property type="evidence" value="ECO:0007669"/>
    <property type="project" value="UniProtKB-UniRule"/>
</dbReference>
<dbReference type="GO" id="GO:0016887">
    <property type="term" value="F:ATP hydrolysis activity"/>
    <property type="evidence" value="ECO:0007669"/>
    <property type="project" value="InterPro"/>
</dbReference>
<dbReference type="GO" id="GO:0046933">
    <property type="term" value="F:proton-transporting ATP synthase activity, rotational mechanism"/>
    <property type="evidence" value="ECO:0007669"/>
    <property type="project" value="UniProtKB-UniRule"/>
</dbReference>
<dbReference type="CDD" id="cd18110">
    <property type="entry name" value="ATP-synt_F1_beta_C"/>
    <property type="match status" value="1"/>
</dbReference>
<dbReference type="CDD" id="cd18115">
    <property type="entry name" value="ATP-synt_F1_beta_N"/>
    <property type="match status" value="1"/>
</dbReference>
<dbReference type="CDD" id="cd01133">
    <property type="entry name" value="F1-ATPase_beta_CD"/>
    <property type="match status" value="1"/>
</dbReference>
<dbReference type="FunFam" id="1.10.1140.10:FF:000001">
    <property type="entry name" value="ATP synthase subunit beta"/>
    <property type="match status" value="1"/>
</dbReference>
<dbReference type="FunFam" id="3.40.50.300:FF:000004">
    <property type="entry name" value="ATP synthase subunit beta"/>
    <property type="match status" value="1"/>
</dbReference>
<dbReference type="Gene3D" id="2.40.10.170">
    <property type="match status" value="1"/>
</dbReference>
<dbReference type="Gene3D" id="1.10.1140.10">
    <property type="entry name" value="Bovine Mitochondrial F1-atpase, Atp Synthase Beta Chain, Chain D, domain 3"/>
    <property type="match status" value="1"/>
</dbReference>
<dbReference type="Gene3D" id="3.40.50.300">
    <property type="entry name" value="P-loop containing nucleotide triphosphate hydrolases"/>
    <property type="match status" value="1"/>
</dbReference>
<dbReference type="HAMAP" id="MF_01347">
    <property type="entry name" value="ATP_synth_beta_bact"/>
    <property type="match status" value="1"/>
</dbReference>
<dbReference type="InterPro" id="IPR003593">
    <property type="entry name" value="AAA+_ATPase"/>
</dbReference>
<dbReference type="InterPro" id="IPR055190">
    <property type="entry name" value="ATP-synt_VA_C"/>
</dbReference>
<dbReference type="InterPro" id="IPR005722">
    <property type="entry name" value="ATP_synth_F1_bsu"/>
</dbReference>
<dbReference type="InterPro" id="IPR020003">
    <property type="entry name" value="ATPase_a/bsu_AS"/>
</dbReference>
<dbReference type="InterPro" id="IPR050053">
    <property type="entry name" value="ATPase_alpha/beta_chains"/>
</dbReference>
<dbReference type="InterPro" id="IPR004100">
    <property type="entry name" value="ATPase_F1/V1/A1_a/bsu_N"/>
</dbReference>
<dbReference type="InterPro" id="IPR036121">
    <property type="entry name" value="ATPase_F1/V1/A1_a/bsu_N_sf"/>
</dbReference>
<dbReference type="InterPro" id="IPR000194">
    <property type="entry name" value="ATPase_F1/V1/A1_a/bsu_nucl-bd"/>
</dbReference>
<dbReference type="InterPro" id="IPR024034">
    <property type="entry name" value="ATPase_F1/V1_b/a_C"/>
</dbReference>
<dbReference type="InterPro" id="IPR027417">
    <property type="entry name" value="P-loop_NTPase"/>
</dbReference>
<dbReference type="NCBIfam" id="TIGR01039">
    <property type="entry name" value="atpD"/>
    <property type="match status" value="1"/>
</dbReference>
<dbReference type="PANTHER" id="PTHR15184">
    <property type="entry name" value="ATP SYNTHASE"/>
    <property type="match status" value="1"/>
</dbReference>
<dbReference type="PANTHER" id="PTHR15184:SF71">
    <property type="entry name" value="ATP SYNTHASE SUBUNIT BETA, MITOCHONDRIAL"/>
    <property type="match status" value="1"/>
</dbReference>
<dbReference type="Pfam" id="PF00006">
    <property type="entry name" value="ATP-synt_ab"/>
    <property type="match status" value="1"/>
</dbReference>
<dbReference type="Pfam" id="PF02874">
    <property type="entry name" value="ATP-synt_ab_N"/>
    <property type="match status" value="1"/>
</dbReference>
<dbReference type="Pfam" id="PF22919">
    <property type="entry name" value="ATP-synt_VA_C"/>
    <property type="match status" value="1"/>
</dbReference>
<dbReference type="SMART" id="SM00382">
    <property type="entry name" value="AAA"/>
    <property type="match status" value="1"/>
</dbReference>
<dbReference type="SUPFAM" id="SSF47917">
    <property type="entry name" value="C-terminal domain of alpha and beta subunits of F1 ATP synthase"/>
    <property type="match status" value="1"/>
</dbReference>
<dbReference type="SUPFAM" id="SSF50615">
    <property type="entry name" value="N-terminal domain of alpha and beta subunits of F1 ATP synthase"/>
    <property type="match status" value="1"/>
</dbReference>
<dbReference type="SUPFAM" id="SSF52540">
    <property type="entry name" value="P-loop containing nucleoside triphosphate hydrolases"/>
    <property type="match status" value="1"/>
</dbReference>
<dbReference type="PROSITE" id="PS00152">
    <property type="entry name" value="ATPASE_ALPHA_BETA"/>
    <property type="match status" value="1"/>
</dbReference>
<reference key="1">
    <citation type="journal article" date="2005" name="BMC Genomics">
        <title>Bacterial genome adaptation to niches: divergence of the potential virulence genes in three Burkholderia species of different survival strategies.</title>
        <authorList>
            <person name="Kim H.S."/>
            <person name="Schell M.A."/>
            <person name="Yu Y."/>
            <person name="Ulrich R.L."/>
            <person name="Sarria S.H."/>
            <person name="Nierman W.C."/>
            <person name="DeShazer D."/>
        </authorList>
    </citation>
    <scope>NUCLEOTIDE SEQUENCE [LARGE SCALE GENOMIC DNA]</scope>
    <source>
        <strain>ATCC 700388 / DSM 13276 / CCUG 48851 / CIP 106301 / E264</strain>
    </source>
</reference>
<organism>
    <name type="scientific">Burkholderia thailandensis (strain ATCC 700388 / DSM 13276 / CCUG 48851 / CIP 106301 / E264)</name>
    <dbReference type="NCBI Taxonomy" id="271848"/>
    <lineage>
        <taxon>Bacteria</taxon>
        <taxon>Pseudomonadati</taxon>
        <taxon>Pseudomonadota</taxon>
        <taxon>Betaproteobacteria</taxon>
        <taxon>Burkholderiales</taxon>
        <taxon>Burkholderiaceae</taxon>
        <taxon>Burkholderia</taxon>
        <taxon>pseudomallei group</taxon>
    </lineage>
</organism>
<sequence>MSTAALVEGKIVQCIGAVIDVEFPRESMPKIYDALILEGSELTLEVQQQLGDGVVRTICLGASDGLRRGVVVKNTGNPISVPVGKPTLGRIMDVLGRPIDEAGPIESENKRSIHQKAPAFDELSPSTELLETGIKVIDLICPFAKGGKVGLFGGAGVGKTVNMMELINNIAKEHGGYSVFAGVGERTREGNDFYHEMKDSNVLDKVALVYGQMNEPPGNRLRVALTGLTMAEHFRDEGLDVLFFVDNIYRFTLAGTEVSALLGRMPSAVGYQPTLAEEMGKLQERITSTKKGSITSVQAVYVPADDLTDPSPATTFGHLDATVVLSRDIASLGIYPAVDPLDSTSRQIDPNVIGEEHYSITRRVQQTLQRYKELRDIIAILGMDELSPEDKLSVARARKIQRFLSQPFHVAEVFTGSPGKYVPLKETIRGFKMIVDGECDHLPEQAFYMVGTIDEAFEKAKKIQ</sequence>
<name>ATPB1_BURTA</name>
<protein>
    <recommendedName>
        <fullName evidence="1">ATP synthase subunit beta 1</fullName>
        <ecNumber evidence="1">7.1.2.2</ecNumber>
    </recommendedName>
    <alternativeName>
        <fullName evidence="1">ATP synthase F1 sector subunit beta 1</fullName>
    </alternativeName>
    <alternativeName>
        <fullName evidence="1">F-ATPase subunit beta 1</fullName>
    </alternativeName>
</protein>
<comment type="function">
    <text evidence="1">Produces ATP from ADP in the presence of a proton gradient across the membrane. The catalytic sites are hosted primarily by the beta subunits.</text>
</comment>
<comment type="catalytic activity">
    <reaction evidence="1">
        <text>ATP + H2O + 4 H(+)(in) = ADP + phosphate + 5 H(+)(out)</text>
        <dbReference type="Rhea" id="RHEA:57720"/>
        <dbReference type="ChEBI" id="CHEBI:15377"/>
        <dbReference type="ChEBI" id="CHEBI:15378"/>
        <dbReference type="ChEBI" id="CHEBI:30616"/>
        <dbReference type="ChEBI" id="CHEBI:43474"/>
        <dbReference type="ChEBI" id="CHEBI:456216"/>
        <dbReference type="EC" id="7.1.2.2"/>
    </reaction>
</comment>
<comment type="subunit">
    <text evidence="1">F-type ATPases have 2 components, CF(1) - the catalytic core - and CF(0) - the membrane proton channel. CF(1) has five subunits: alpha(3), beta(3), gamma(1), delta(1), epsilon(1). CF(0) has three main subunits: a(1), b(2) and c(9-12). The alpha and beta chains form an alternating ring which encloses part of the gamma chain. CF(1) is attached to CF(0) by a central stalk formed by the gamma and epsilon chains, while a peripheral stalk is formed by the delta and b chains.</text>
</comment>
<comment type="subcellular location">
    <subcellularLocation>
        <location evidence="1">Cell inner membrane</location>
        <topology evidence="1">Peripheral membrane protein</topology>
    </subcellularLocation>
</comment>
<comment type="similarity">
    <text evidence="1">Belongs to the ATPase alpha/beta chains family.</text>
</comment>
<accession>Q2STE9</accession>
<gene>
    <name evidence="1" type="primary">atpD1</name>
    <name type="ordered locus">BTH_I3308</name>
</gene>
<proteinExistence type="evidence at protein level"/>
<feature type="chain" id="PRO_0000254235" description="ATP synthase subunit beta 1">
    <location>
        <begin position="1"/>
        <end position="464"/>
    </location>
</feature>
<feature type="binding site" evidence="1">
    <location>
        <begin position="153"/>
        <end position="160"/>
    </location>
    <ligand>
        <name>ATP</name>
        <dbReference type="ChEBI" id="CHEBI:30616"/>
    </ligand>
</feature>
<feature type="strand" evidence="2">
    <location>
        <begin position="8"/>
        <end position="22"/>
    </location>
</feature>
<feature type="strand" evidence="2">
    <location>
        <begin position="34"/>
        <end position="36"/>
    </location>
</feature>
<feature type="strand" evidence="2">
    <location>
        <begin position="43"/>
        <end position="51"/>
    </location>
</feature>
<feature type="strand" evidence="2">
    <location>
        <begin position="54"/>
        <end position="60"/>
    </location>
</feature>
<feature type="strand" evidence="2">
    <location>
        <begin position="71"/>
        <end position="74"/>
    </location>
</feature>
<feature type="strand" evidence="2">
    <location>
        <begin position="80"/>
        <end position="82"/>
    </location>
</feature>
<feature type="helix" evidence="2">
    <location>
        <begin position="85"/>
        <end position="87"/>
    </location>
</feature>
<feature type="strand" evidence="2">
    <location>
        <begin position="100"/>
        <end position="102"/>
    </location>
</feature>
<feature type="strand" evidence="2">
    <location>
        <begin position="110"/>
        <end position="113"/>
    </location>
</feature>
<feature type="helix" evidence="2">
    <location>
        <begin position="120"/>
        <end position="122"/>
    </location>
</feature>
<feature type="helix" evidence="2">
    <location>
        <begin position="135"/>
        <end position="140"/>
    </location>
</feature>
<feature type="strand" evidence="2">
    <location>
        <begin position="148"/>
        <end position="153"/>
    </location>
</feature>
<feature type="strand" evidence="2">
    <location>
        <begin position="155"/>
        <end position="157"/>
    </location>
</feature>
<feature type="helix" evidence="2">
    <location>
        <begin position="159"/>
        <end position="174"/>
    </location>
</feature>
<feature type="strand" evidence="2">
    <location>
        <begin position="177"/>
        <end position="182"/>
    </location>
</feature>
<feature type="helix" evidence="2">
    <location>
        <begin position="192"/>
        <end position="199"/>
    </location>
</feature>
<feature type="helix" evidence="2">
    <location>
        <begin position="203"/>
        <end position="205"/>
    </location>
</feature>
<feature type="strand" evidence="2">
    <location>
        <begin position="206"/>
        <end position="210"/>
    </location>
</feature>
<feature type="helix" evidence="2">
    <location>
        <begin position="217"/>
        <end position="236"/>
    </location>
</feature>
<feature type="strand" evidence="2">
    <location>
        <begin position="240"/>
        <end position="247"/>
    </location>
</feature>
<feature type="strand" evidence="2">
    <location>
        <begin position="250"/>
        <end position="254"/>
    </location>
</feature>
<feature type="helix" evidence="2">
    <location>
        <begin position="258"/>
        <end position="262"/>
    </location>
</feature>
<feature type="strand" evidence="2">
    <location>
        <begin position="268"/>
        <end position="271"/>
    </location>
</feature>
<feature type="helix" evidence="2">
    <location>
        <begin position="275"/>
        <end position="283"/>
    </location>
</feature>
<feature type="strand" evidence="2">
    <location>
        <begin position="286"/>
        <end position="291"/>
    </location>
</feature>
<feature type="strand" evidence="2">
    <location>
        <begin position="293"/>
        <end position="301"/>
    </location>
</feature>
<feature type="strand" evidence="2">
    <location>
        <begin position="320"/>
        <end position="325"/>
    </location>
</feature>
<feature type="helix" evidence="2">
    <location>
        <begin position="327"/>
        <end position="331"/>
    </location>
</feature>
<feature type="turn" evidence="2">
    <location>
        <begin position="340"/>
        <end position="342"/>
    </location>
</feature>
<feature type="helix" evidence="2">
    <location>
        <begin position="350"/>
        <end position="353"/>
    </location>
</feature>
<feature type="helix" evidence="2">
    <location>
        <begin position="355"/>
        <end position="373"/>
    </location>
</feature>
<feature type="helix" evidence="2">
    <location>
        <begin position="375"/>
        <end position="381"/>
    </location>
</feature>
<feature type="helix" evidence="2">
    <location>
        <begin position="383"/>
        <end position="385"/>
    </location>
</feature>
<feature type="helix" evidence="2">
    <location>
        <begin position="388"/>
        <end position="403"/>
    </location>
</feature>
<feature type="helix" evidence="2">
    <location>
        <begin position="409"/>
        <end position="411"/>
    </location>
</feature>
<feature type="helix" evidence="2">
    <location>
        <begin position="412"/>
        <end position="415"/>
    </location>
</feature>
<feature type="helix" evidence="2">
    <location>
        <begin position="424"/>
        <end position="436"/>
    </location>
</feature>
<feature type="turn" evidence="2">
    <location>
        <begin position="437"/>
        <end position="441"/>
    </location>
</feature>
<feature type="helix" evidence="2">
    <location>
        <begin position="444"/>
        <end position="447"/>
    </location>
</feature>
<feature type="helix" evidence="2">
    <location>
        <begin position="453"/>
        <end position="460"/>
    </location>
</feature>
<evidence type="ECO:0000255" key="1">
    <source>
        <dbReference type="HAMAP-Rule" id="MF_01347"/>
    </source>
</evidence>
<evidence type="ECO:0007829" key="2">
    <source>
        <dbReference type="PDB" id="4Q4L"/>
    </source>
</evidence>
<keyword id="KW-0002">3D-structure</keyword>
<keyword id="KW-0066">ATP synthesis</keyword>
<keyword id="KW-0067">ATP-binding</keyword>
<keyword id="KW-0997">Cell inner membrane</keyword>
<keyword id="KW-1003">Cell membrane</keyword>
<keyword id="KW-0139">CF(1)</keyword>
<keyword id="KW-0375">Hydrogen ion transport</keyword>
<keyword id="KW-0406">Ion transport</keyword>
<keyword id="KW-0472">Membrane</keyword>
<keyword id="KW-0547">Nucleotide-binding</keyword>
<keyword id="KW-1278">Translocase</keyword>
<keyword id="KW-0813">Transport</keyword>